<protein>
    <recommendedName>
        <fullName evidence="1">Protein E6</fullName>
    </recommendedName>
</protein>
<accession>P36804</accession>
<name>VE6_HPV15</name>
<gene>
    <name evidence="1" type="primary">E6</name>
</gene>
<organism>
    <name type="scientific">Human papillomavirus 15</name>
    <dbReference type="NCBI Taxonomy" id="10606"/>
    <lineage>
        <taxon>Viruses</taxon>
        <taxon>Monodnaviria</taxon>
        <taxon>Shotokuvirae</taxon>
        <taxon>Cossaviricota</taxon>
        <taxon>Papovaviricetes</taxon>
        <taxon>Zurhausenvirales</taxon>
        <taxon>Papillomaviridae</taxon>
        <taxon>Firstpapillomavirinae</taxon>
        <taxon>Betapapillomavirus</taxon>
        <taxon>Betapapillomavirus 2</taxon>
    </lineage>
</organism>
<feature type="chain" id="PRO_0000133335" description="Protein E6">
    <location>
        <begin position="1"/>
        <end position="141"/>
    </location>
</feature>
<feature type="zinc finger region" evidence="1">
    <location>
        <begin position="27"/>
        <end position="64"/>
    </location>
</feature>
<feature type="zinc finger region" evidence="1">
    <location>
        <begin position="101"/>
        <end position="137"/>
    </location>
</feature>
<keyword id="KW-0010">Activator</keyword>
<keyword id="KW-0238">DNA-binding</keyword>
<keyword id="KW-0244">Early protein</keyword>
<keyword id="KW-1035">Host cytoplasm</keyword>
<keyword id="KW-1048">Host nucleus</keyword>
<keyword id="KW-0945">Host-virus interaction</keyword>
<keyword id="KW-1090">Inhibition of host innate immune response by virus</keyword>
<keyword id="KW-0479">Metal-binding</keyword>
<keyword id="KW-1119">Modulation of host cell apoptosis by virus</keyword>
<keyword id="KW-1185">Reference proteome</keyword>
<keyword id="KW-0804">Transcription</keyword>
<keyword id="KW-0805">Transcription regulation</keyword>
<keyword id="KW-0899">Viral immunoevasion</keyword>
<keyword id="KW-0862">Zinc</keyword>
<keyword id="KW-0863">Zinc-finger</keyword>
<comment type="function">
    <text evidence="1">Plays a major role in the induction and maintenance of cellular transformation. E6 associates with host UBE3A/E6-AP ubiquitin-protein ligase and modulates its activity. Protects host keratinocytes from apoptosis by mediating the degradation of host BAK1. May also inhibit host immune response.</text>
</comment>
<comment type="subunit">
    <text evidence="1">Forms homodimers. Interacts with ubiquitin-protein ligase UBE3A/E6-AP; this interaction stimulates UBE3A ubiquitin activity. Interacts with host BAK1.</text>
</comment>
<comment type="subcellular location">
    <subcellularLocation>
        <location evidence="1">Host cytoplasm</location>
    </subcellularLocation>
    <subcellularLocation>
        <location evidence="1">Host nucleus</location>
    </subcellularLocation>
</comment>
<comment type="similarity">
    <text evidence="1 2">Belongs to the papillomaviridae E6 protein family.</text>
</comment>
<reference key="1">
    <citation type="journal article" date="1994" name="Curr. Top. Microbiol. Immunol.">
        <title>Primer-directed sequencing of human papillomavirus types.</title>
        <authorList>
            <person name="Delius H."/>
            <person name="Hofmann B."/>
        </authorList>
    </citation>
    <scope>NUCLEOTIDE SEQUENCE [GENOMIC DNA]</scope>
</reference>
<dbReference type="EMBL" id="X74468">
    <property type="protein sequence ID" value="CAA52506.1"/>
    <property type="molecule type" value="Genomic_DNA"/>
</dbReference>
<dbReference type="PIR" id="S36473">
    <property type="entry name" value="S36473"/>
</dbReference>
<dbReference type="SMR" id="P36804"/>
<dbReference type="Proteomes" id="UP000008232">
    <property type="component" value="Genome"/>
</dbReference>
<dbReference type="GO" id="GO:0030430">
    <property type="term" value="C:host cell cytoplasm"/>
    <property type="evidence" value="ECO:0007669"/>
    <property type="project" value="UniProtKB-SubCell"/>
</dbReference>
<dbReference type="GO" id="GO:0042025">
    <property type="term" value="C:host cell nucleus"/>
    <property type="evidence" value="ECO:0007669"/>
    <property type="project" value="UniProtKB-SubCell"/>
</dbReference>
<dbReference type="GO" id="GO:0003677">
    <property type="term" value="F:DNA binding"/>
    <property type="evidence" value="ECO:0007669"/>
    <property type="project" value="UniProtKB-UniRule"/>
</dbReference>
<dbReference type="GO" id="GO:0008270">
    <property type="term" value="F:zinc ion binding"/>
    <property type="evidence" value="ECO:0007669"/>
    <property type="project" value="UniProtKB-KW"/>
</dbReference>
<dbReference type="GO" id="GO:0006351">
    <property type="term" value="P:DNA-templated transcription"/>
    <property type="evidence" value="ECO:0007669"/>
    <property type="project" value="UniProtKB-UniRule"/>
</dbReference>
<dbReference type="GO" id="GO:0006355">
    <property type="term" value="P:regulation of DNA-templated transcription"/>
    <property type="evidence" value="ECO:0007669"/>
    <property type="project" value="UniProtKB-UniRule"/>
</dbReference>
<dbReference type="GO" id="GO:0052150">
    <property type="term" value="P:symbiont-mediated perturbation of host apoptosis"/>
    <property type="evidence" value="ECO:0007669"/>
    <property type="project" value="UniProtKB-KW"/>
</dbReference>
<dbReference type="GO" id="GO:0039648">
    <property type="term" value="P:symbiont-mediated perturbation of host ubiquitin-like protein modification"/>
    <property type="evidence" value="ECO:0007669"/>
    <property type="project" value="UniProtKB-UniRule"/>
</dbReference>
<dbReference type="GO" id="GO:0052170">
    <property type="term" value="P:symbiont-mediated suppression of host innate immune response"/>
    <property type="evidence" value="ECO:0007669"/>
    <property type="project" value="UniProtKB-KW"/>
</dbReference>
<dbReference type="GO" id="GO:0039502">
    <property type="term" value="P:symbiont-mediated suppression of host type I interferon-mediated signaling pathway"/>
    <property type="evidence" value="ECO:0007669"/>
    <property type="project" value="UniProtKB-UniRule"/>
</dbReference>
<dbReference type="Gene3D" id="3.30.240.40">
    <property type="entry name" value="E6 early regulatory protein"/>
    <property type="match status" value="2"/>
</dbReference>
<dbReference type="HAMAP" id="MF_04006">
    <property type="entry name" value="HPV_E6"/>
    <property type="match status" value="1"/>
</dbReference>
<dbReference type="InterPro" id="IPR001334">
    <property type="entry name" value="E6"/>
</dbReference>
<dbReference type="InterPro" id="IPR038575">
    <property type="entry name" value="E6_sf"/>
</dbReference>
<dbReference type="Pfam" id="PF00518">
    <property type="entry name" value="E6"/>
    <property type="match status" value="1"/>
</dbReference>
<dbReference type="SUPFAM" id="SSF161229">
    <property type="entry name" value="E6 C-terminal domain-like"/>
    <property type="match status" value="2"/>
</dbReference>
<proteinExistence type="inferred from homology"/>
<organismHost>
    <name type="scientific">Homo sapiens</name>
    <name type="common">Human</name>
    <dbReference type="NCBI Taxonomy" id="9606"/>
</organismHost>
<evidence type="ECO:0000255" key="1">
    <source>
        <dbReference type="HAMAP-Rule" id="MF_04006"/>
    </source>
</evidence>
<evidence type="ECO:0000305" key="2"/>
<sequence>MDRPKPFSVQQLADTLCIPLVDILLPCRFCQRFLTYIELVSLNRKGLQLIWTEEDFVFACCSSCAFATAQFEFSNFYEQSVCSWEIEIVEQKPVGDIIIRCKFCLKKLDLIEKLDICYKEEQFHKVRRNWKGLCRHCRAIE</sequence>